<protein>
    <recommendedName>
        <fullName evidence="2">Translation initiation factor IF-2</fullName>
    </recommendedName>
</protein>
<keyword id="KW-0963">Cytoplasm</keyword>
<keyword id="KW-0342">GTP-binding</keyword>
<keyword id="KW-0396">Initiation factor</keyword>
<keyword id="KW-0547">Nucleotide-binding</keyword>
<keyword id="KW-0648">Protein biosynthesis</keyword>
<accession>B8ZM93</accession>
<gene>
    <name evidence="2" type="primary">infB</name>
    <name type="ordered locus">SPN23F05020</name>
</gene>
<feature type="chain" id="PRO_1000190636" description="Translation initiation factor IF-2">
    <location>
        <begin position="1"/>
        <end position="930"/>
    </location>
</feature>
<feature type="domain" description="tr-type G">
    <location>
        <begin position="432"/>
        <end position="599"/>
    </location>
</feature>
<feature type="region of interest" description="Disordered" evidence="3">
    <location>
        <begin position="50"/>
        <end position="217"/>
    </location>
</feature>
<feature type="region of interest" description="Disordered" evidence="3">
    <location>
        <begin position="260"/>
        <end position="346"/>
    </location>
</feature>
<feature type="region of interest" description="G1" evidence="1">
    <location>
        <begin position="441"/>
        <end position="448"/>
    </location>
</feature>
<feature type="region of interest" description="G2" evidence="1">
    <location>
        <begin position="466"/>
        <end position="470"/>
    </location>
</feature>
<feature type="region of interest" description="G3" evidence="1">
    <location>
        <begin position="487"/>
        <end position="490"/>
    </location>
</feature>
<feature type="region of interest" description="G4" evidence="1">
    <location>
        <begin position="541"/>
        <end position="544"/>
    </location>
</feature>
<feature type="region of interest" description="G5" evidence="1">
    <location>
        <begin position="577"/>
        <end position="579"/>
    </location>
</feature>
<feature type="compositionally biased region" description="Low complexity" evidence="3">
    <location>
        <begin position="50"/>
        <end position="67"/>
    </location>
</feature>
<feature type="compositionally biased region" description="Basic and acidic residues" evidence="3">
    <location>
        <begin position="68"/>
        <end position="90"/>
    </location>
</feature>
<feature type="compositionally biased region" description="Basic and acidic residues" evidence="3">
    <location>
        <begin position="110"/>
        <end position="125"/>
    </location>
</feature>
<feature type="compositionally biased region" description="Low complexity" evidence="3">
    <location>
        <begin position="129"/>
        <end position="141"/>
    </location>
</feature>
<feature type="compositionally biased region" description="Basic and acidic residues" evidence="3">
    <location>
        <begin position="157"/>
        <end position="167"/>
    </location>
</feature>
<feature type="compositionally biased region" description="Basic and acidic residues" evidence="3">
    <location>
        <begin position="262"/>
        <end position="295"/>
    </location>
</feature>
<feature type="compositionally biased region" description="Low complexity" evidence="3">
    <location>
        <begin position="309"/>
        <end position="318"/>
    </location>
</feature>
<feature type="compositionally biased region" description="Basic and acidic residues" evidence="3">
    <location>
        <begin position="337"/>
        <end position="346"/>
    </location>
</feature>
<feature type="binding site" evidence="2">
    <location>
        <begin position="441"/>
        <end position="448"/>
    </location>
    <ligand>
        <name>GTP</name>
        <dbReference type="ChEBI" id="CHEBI:37565"/>
    </ligand>
</feature>
<feature type="binding site" evidence="2">
    <location>
        <begin position="487"/>
        <end position="491"/>
    </location>
    <ligand>
        <name>GTP</name>
        <dbReference type="ChEBI" id="CHEBI:37565"/>
    </ligand>
</feature>
<feature type="binding site" evidence="2">
    <location>
        <begin position="541"/>
        <end position="544"/>
    </location>
    <ligand>
        <name>GTP</name>
        <dbReference type="ChEBI" id="CHEBI:37565"/>
    </ligand>
</feature>
<evidence type="ECO:0000250" key="1"/>
<evidence type="ECO:0000255" key="2">
    <source>
        <dbReference type="HAMAP-Rule" id="MF_00100"/>
    </source>
</evidence>
<evidence type="ECO:0000256" key="3">
    <source>
        <dbReference type="SAM" id="MobiDB-lite"/>
    </source>
</evidence>
<sequence length="930" mass="102925">MSKKRLYEIAKELGKESKEVVARAKELGLDVKSHSSSVEEAVAAKIAASFKPAAAPKVEAKPAAPKVSAEKKAEKSEPAKPAVAKEEAKPAEPVAPKTEKVAVKPQSRNFKAEREARAKEQAERRKQNKGNNRDQQQNGNRQKNDGRNGGKQGQSNRDNRRFNDQAKKQQGQQKRRNERRQQEDKRSNQAAPRIDFKARAAALKAEQNAEYARSSEERFKQYQAAKEALAQANKRKEPEEIFEEAAKLAEQAQQVQAVVEVVPEKKEPAVDTRRKKQARPDKNRDDYDHEEDGPRKQQKNRSSQNQVRNQKNSNWNNNKKNKKGNNKNNRNQTPKPVTERKFHELPTEFEYTDGMTVAEIAKRIKREPAEIVKKLFMMGVMATQNQSLDGETIELLMVDYGIEAKQKVEVDNADIERFFVEDGYLNEDELVERPPVVTIMGHVDHGKTTLLDTLRNSRVATGEAGGITQHIGAYQIVENGKKITFLDTPGHAAFTSMRARGASVTDITILVVAADDGVMPQTIEAINHSKAANVPIIVAINKIDKPGANPERVIGELAEHGVMSTAWGGDSEFVEISAKFNQNIEELLETVLLVAEIQELKADPTVRAIGTVIEARLDKGKGAVATLLVQQGTLNVQDPIVVGNTFGRVRAMTNDLGRRVKVAGPSTPVSITGLNEAPMAGDHFAVYEDEKSARAAGEERAKRALMKQRQATQRVSLENLFDTLKAGELKSVNVIIKADVQGSVEALSASLQKIDVEGVKVTIVHSAVGAINESDVTLAEASNAFIVGFNVRPTPQARQQAEADDVEIRLHSIIYKVIEEMEEAMKGMLDSEFEEKVIGEAVIRETFKVSKVGTIGGFMVINGKVARDSKVRVIRDGVVIYDGELASLKHYKDDVKEVTNGREGGLMIDGYNDIKMDDVIEAYVMEEIKR</sequence>
<dbReference type="EMBL" id="FM211187">
    <property type="protein sequence ID" value="CAR68352.1"/>
    <property type="molecule type" value="Genomic_DNA"/>
</dbReference>
<dbReference type="RefSeq" id="WP_000039212.1">
    <property type="nucleotide sequence ID" value="NC_011900.1"/>
</dbReference>
<dbReference type="SMR" id="B8ZM93"/>
<dbReference type="KEGG" id="sne:SPN23F05020"/>
<dbReference type="HOGENOM" id="CLU_006301_5_0_9"/>
<dbReference type="GO" id="GO:0005829">
    <property type="term" value="C:cytosol"/>
    <property type="evidence" value="ECO:0007669"/>
    <property type="project" value="TreeGrafter"/>
</dbReference>
<dbReference type="GO" id="GO:0005525">
    <property type="term" value="F:GTP binding"/>
    <property type="evidence" value="ECO:0007669"/>
    <property type="project" value="UniProtKB-KW"/>
</dbReference>
<dbReference type="GO" id="GO:0003924">
    <property type="term" value="F:GTPase activity"/>
    <property type="evidence" value="ECO:0007669"/>
    <property type="project" value="UniProtKB-UniRule"/>
</dbReference>
<dbReference type="GO" id="GO:0003743">
    <property type="term" value="F:translation initiation factor activity"/>
    <property type="evidence" value="ECO:0007669"/>
    <property type="project" value="UniProtKB-UniRule"/>
</dbReference>
<dbReference type="CDD" id="cd01887">
    <property type="entry name" value="IF2_eIF5B"/>
    <property type="match status" value="1"/>
</dbReference>
<dbReference type="CDD" id="cd03702">
    <property type="entry name" value="IF2_mtIF2_II"/>
    <property type="match status" value="1"/>
</dbReference>
<dbReference type="CDD" id="cd03692">
    <property type="entry name" value="mtIF2_IVc"/>
    <property type="match status" value="1"/>
</dbReference>
<dbReference type="FunFam" id="1.10.10.2480:FF:000003">
    <property type="entry name" value="Translation initiation factor IF-2"/>
    <property type="match status" value="1"/>
</dbReference>
<dbReference type="FunFam" id="2.40.30.10:FF:000007">
    <property type="entry name" value="Translation initiation factor IF-2"/>
    <property type="match status" value="1"/>
</dbReference>
<dbReference type="FunFam" id="2.40.30.10:FF:000008">
    <property type="entry name" value="Translation initiation factor IF-2"/>
    <property type="match status" value="1"/>
</dbReference>
<dbReference type="FunFam" id="3.40.50.10050:FF:000001">
    <property type="entry name" value="Translation initiation factor IF-2"/>
    <property type="match status" value="1"/>
</dbReference>
<dbReference type="FunFam" id="3.40.50.300:FF:000019">
    <property type="entry name" value="Translation initiation factor IF-2"/>
    <property type="match status" value="1"/>
</dbReference>
<dbReference type="Gene3D" id="1.10.10.2480">
    <property type="match status" value="1"/>
</dbReference>
<dbReference type="Gene3D" id="3.40.50.300">
    <property type="entry name" value="P-loop containing nucleotide triphosphate hydrolases"/>
    <property type="match status" value="1"/>
</dbReference>
<dbReference type="Gene3D" id="2.40.30.10">
    <property type="entry name" value="Translation factors"/>
    <property type="match status" value="2"/>
</dbReference>
<dbReference type="Gene3D" id="3.40.50.10050">
    <property type="entry name" value="Translation initiation factor IF- 2, domain 3"/>
    <property type="match status" value="1"/>
</dbReference>
<dbReference type="HAMAP" id="MF_00100_B">
    <property type="entry name" value="IF_2_B"/>
    <property type="match status" value="1"/>
</dbReference>
<dbReference type="InterPro" id="IPR053905">
    <property type="entry name" value="EF-G-like_DII"/>
</dbReference>
<dbReference type="InterPro" id="IPR044145">
    <property type="entry name" value="IF2_II"/>
</dbReference>
<dbReference type="InterPro" id="IPR006847">
    <property type="entry name" value="IF2_N"/>
</dbReference>
<dbReference type="InterPro" id="IPR027417">
    <property type="entry name" value="P-loop_NTPase"/>
</dbReference>
<dbReference type="InterPro" id="IPR005225">
    <property type="entry name" value="Small_GTP-bd"/>
</dbReference>
<dbReference type="InterPro" id="IPR000795">
    <property type="entry name" value="T_Tr_GTP-bd_dom"/>
</dbReference>
<dbReference type="InterPro" id="IPR000178">
    <property type="entry name" value="TF_IF2_bacterial-like"/>
</dbReference>
<dbReference type="InterPro" id="IPR015760">
    <property type="entry name" value="TIF_IF2"/>
</dbReference>
<dbReference type="InterPro" id="IPR023115">
    <property type="entry name" value="TIF_IF2_dom3"/>
</dbReference>
<dbReference type="InterPro" id="IPR036925">
    <property type="entry name" value="TIF_IF2_dom3_sf"/>
</dbReference>
<dbReference type="InterPro" id="IPR009000">
    <property type="entry name" value="Transl_B-barrel_sf"/>
</dbReference>
<dbReference type="NCBIfam" id="TIGR00487">
    <property type="entry name" value="IF-2"/>
    <property type="match status" value="1"/>
</dbReference>
<dbReference type="NCBIfam" id="TIGR00231">
    <property type="entry name" value="small_GTP"/>
    <property type="match status" value="1"/>
</dbReference>
<dbReference type="PANTHER" id="PTHR43381:SF5">
    <property type="entry name" value="TR-TYPE G DOMAIN-CONTAINING PROTEIN"/>
    <property type="match status" value="1"/>
</dbReference>
<dbReference type="PANTHER" id="PTHR43381">
    <property type="entry name" value="TRANSLATION INITIATION FACTOR IF-2-RELATED"/>
    <property type="match status" value="1"/>
</dbReference>
<dbReference type="Pfam" id="PF22042">
    <property type="entry name" value="EF-G_D2"/>
    <property type="match status" value="1"/>
</dbReference>
<dbReference type="Pfam" id="PF00009">
    <property type="entry name" value="GTP_EFTU"/>
    <property type="match status" value="1"/>
</dbReference>
<dbReference type="Pfam" id="PF11987">
    <property type="entry name" value="IF-2"/>
    <property type="match status" value="1"/>
</dbReference>
<dbReference type="Pfam" id="PF04760">
    <property type="entry name" value="IF2_N"/>
    <property type="match status" value="2"/>
</dbReference>
<dbReference type="SUPFAM" id="SSF52156">
    <property type="entry name" value="Initiation factor IF2/eIF5b, domain 3"/>
    <property type="match status" value="1"/>
</dbReference>
<dbReference type="SUPFAM" id="SSF52540">
    <property type="entry name" value="P-loop containing nucleoside triphosphate hydrolases"/>
    <property type="match status" value="1"/>
</dbReference>
<dbReference type="SUPFAM" id="SSF50447">
    <property type="entry name" value="Translation proteins"/>
    <property type="match status" value="2"/>
</dbReference>
<dbReference type="PROSITE" id="PS51722">
    <property type="entry name" value="G_TR_2"/>
    <property type="match status" value="1"/>
</dbReference>
<dbReference type="PROSITE" id="PS01176">
    <property type="entry name" value="IF2"/>
    <property type="match status" value="1"/>
</dbReference>
<reference key="1">
    <citation type="journal article" date="2009" name="J. Bacteriol.">
        <title>Role of conjugative elements in the evolution of the multidrug-resistant pandemic clone Streptococcus pneumoniae Spain23F ST81.</title>
        <authorList>
            <person name="Croucher N.J."/>
            <person name="Walker D."/>
            <person name="Romero P."/>
            <person name="Lennard N."/>
            <person name="Paterson G.K."/>
            <person name="Bason N.C."/>
            <person name="Mitchell A.M."/>
            <person name="Quail M.A."/>
            <person name="Andrew P.W."/>
            <person name="Parkhill J."/>
            <person name="Bentley S.D."/>
            <person name="Mitchell T.J."/>
        </authorList>
    </citation>
    <scope>NUCLEOTIDE SEQUENCE [LARGE SCALE GENOMIC DNA]</scope>
    <source>
        <strain>ATCC 700669 / Spain 23F-1</strain>
    </source>
</reference>
<comment type="function">
    <text evidence="2">One of the essential components for the initiation of protein synthesis. Protects formylmethionyl-tRNA from spontaneous hydrolysis and promotes its binding to the 30S ribosomal subunits. Also involved in the hydrolysis of GTP during the formation of the 70S ribosomal complex.</text>
</comment>
<comment type="subcellular location">
    <subcellularLocation>
        <location evidence="2">Cytoplasm</location>
    </subcellularLocation>
</comment>
<comment type="similarity">
    <text evidence="2">Belongs to the TRAFAC class translation factor GTPase superfamily. Classic translation factor GTPase family. IF-2 subfamily.</text>
</comment>
<organism>
    <name type="scientific">Streptococcus pneumoniae (strain ATCC 700669 / Spain 23F-1)</name>
    <dbReference type="NCBI Taxonomy" id="561276"/>
    <lineage>
        <taxon>Bacteria</taxon>
        <taxon>Bacillati</taxon>
        <taxon>Bacillota</taxon>
        <taxon>Bacilli</taxon>
        <taxon>Lactobacillales</taxon>
        <taxon>Streptococcaceae</taxon>
        <taxon>Streptococcus</taxon>
    </lineage>
</organism>
<name>IF2_STRPJ</name>
<proteinExistence type="inferred from homology"/>